<name>DPO4_STAAC</name>
<dbReference type="EC" id="2.7.7.7" evidence="1"/>
<dbReference type="EMBL" id="CP000046">
    <property type="protein sequence ID" value="AAW38396.1"/>
    <property type="molecule type" value="Genomic_DNA"/>
</dbReference>
<dbReference type="RefSeq" id="WP_000140176.1">
    <property type="nucleotide sequence ID" value="NZ_JBGOFO010000006.1"/>
</dbReference>
<dbReference type="SMR" id="Q5HEM7"/>
<dbReference type="KEGG" id="sac:SACOL1955"/>
<dbReference type="HOGENOM" id="CLU_012348_1_2_9"/>
<dbReference type="Proteomes" id="UP000000530">
    <property type="component" value="Chromosome"/>
</dbReference>
<dbReference type="GO" id="GO:0005829">
    <property type="term" value="C:cytosol"/>
    <property type="evidence" value="ECO:0007669"/>
    <property type="project" value="TreeGrafter"/>
</dbReference>
<dbReference type="GO" id="GO:0003684">
    <property type="term" value="F:damaged DNA binding"/>
    <property type="evidence" value="ECO:0007669"/>
    <property type="project" value="InterPro"/>
</dbReference>
<dbReference type="GO" id="GO:0003887">
    <property type="term" value="F:DNA-directed DNA polymerase activity"/>
    <property type="evidence" value="ECO:0007669"/>
    <property type="project" value="UniProtKB-UniRule"/>
</dbReference>
<dbReference type="GO" id="GO:0000287">
    <property type="term" value="F:magnesium ion binding"/>
    <property type="evidence" value="ECO:0007669"/>
    <property type="project" value="UniProtKB-UniRule"/>
</dbReference>
<dbReference type="GO" id="GO:0006261">
    <property type="term" value="P:DNA-templated DNA replication"/>
    <property type="evidence" value="ECO:0007669"/>
    <property type="project" value="UniProtKB-UniRule"/>
</dbReference>
<dbReference type="GO" id="GO:0042276">
    <property type="term" value="P:error-prone translesion synthesis"/>
    <property type="evidence" value="ECO:0007669"/>
    <property type="project" value="TreeGrafter"/>
</dbReference>
<dbReference type="GO" id="GO:0009432">
    <property type="term" value="P:SOS response"/>
    <property type="evidence" value="ECO:0007669"/>
    <property type="project" value="TreeGrafter"/>
</dbReference>
<dbReference type="CDD" id="cd03586">
    <property type="entry name" value="PolY_Pol_IV_kappa"/>
    <property type="match status" value="1"/>
</dbReference>
<dbReference type="FunFam" id="3.30.1490.100:FF:000004">
    <property type="entry name" value="DNA polymerase IV"/>
    <property type="match status" value="1"/>
</dbReference>
<dbReference type="FunFam" id="3.40.1170.60:FF:000001">
    <property type="entry name" value="DNA polymerase IV"/>
    <property type="match status" value="1"/>
</dbReference>
<dbReference type="Gene3D" id="3.30.70.270">
    <property type="match status" value="1"/>
</dbReference>
<dbReference type="Gene3D" id="3.40.1170.60">
    <property type="match status" value="1"/>
</dbReference>
<dbReference type="Gene3D" id="1.10.150.20">
    <property type="entry name" value="5' to 3' exonuclease, C-terminal subdomain"/>
    <property type="match status" value="1"/>
</dbReference>
<dbReference type="Gene3D" id="3.30.1490.100">
    <property type="entry name" value="DNA polymerase, Y-family, little finger domain"/>
    <property type="match status" value="1"/>
</dbReference>
<dbReference type="HAMAP" id="MF_01113">
    <property type="entry name" value="DNApol_IV"/>
    <property type="match status" value="1"/>
</dbReference>
<dbReference type="InterPro" id="IPR043502">
    <property type="entry name" value="DNA/RNA_pol_sf"/>
</dbReference>
<dbReference type="InterPro" id="IPR036775">
    <property type="entry name" value="DNA_pol_Y-fam_lit_finger_sf"/>
</dbReference>
<dbReference type="InterPro" id="IPR017961">
    <property type="entry name" value="DNA_pol_Y-fam_little_finger"/>
</dbReference>
<dbReference type="InterPro" id="IPR050116">
    <property type="entry name" value="DNA_polymerase-Y"/>
</dbReference>
<dbReference type="InterPro" id="IPR022880">
    <property type="entry name" value="DNApol_IV"/>
</dbReference>
<dbReference type="InterPro" id="IPR043128">
    <property type="entry name" value="Rev_trsase/Diguanyl_cyclase"/>
</dbReference>
<dbReference type="InterPro" id="IPR001126">
    <property type="entry name" value="UmuC"/>
</dbReference>
<dbReference type="NCBIfam" id="NF002677">
    <property type="entry name" value="PRK02406.1"/>
    <property type="match status" value="1"/>
</dbReference>
<dbReference type="NCBIfam" id="NF010731">
    <property type="entry name" value="PRK14133.1"/>
    <property type="match status" value="1"/>
</dbReference>
<dbReference type="PANTHER" id="PTHR11076:SF33">
    <property type="entry name" value="DNA POLYMERASE KAPPA"/>
    <property type="match status" value="1"/>
</dbReference>
<dbReference type="PANTHER" id="PTHR11076">
    <property type="entry name" value="DNA REPAIR POLYMERASE UMUC / TRANSFERASE FAMILY MEMBER"/>
    <property type="match status" value="1"/>
</dbReference>
<dbReference type="Pfam" id="PF00817">
    <property type="entry name" value="IMS"/>
    <property type="match status" value="1"/>
</dbReference>
<dbReference type="Pfam" id="PF11799">
    <property type="entry name" value="IMS_C"/>
    <property type="match status" value="1"/>
</dbReference>
<dbReference type="SUPFAM" id="SSF56672">
    <property type="entry name" value="DNA/RNA polymerases"/>
    <property type="match status" value="1"/>
</dbReference>
<dbReference type="SUPFAM" id="SSF100879">
    <property type="entry name" value="Lesion bypass DNA polymerase (Y-family), little finger domain"/>
    <property type="match status" value="1"/>
</dbReference>
<dbReference type="PROSITE" id="PS50173">
    <property type="entry name" value="UMUC"/>
    <property type="match status" value="1"/>
</dbReference>
<sequence length="356" mass="40315">MTERRIIHIDMDYFFAQVEMRDNPKLKGKPVIVGGKASSRGVVSTASYEARKYGVHSAMPMSQAHKLCPNGYFVTSNFGAYRETSAQIMSIFRSYTDKVEPMSLDEAYLDITELVRPDLPASKIAQYIRKDILEQTHLTASAGVSYNKFLAKLASGMNKPDGMTVIDYQNVHDILMTLDIGDFPGVGKASKKVMHDNGIFNGRDLYEKTEFELIRLFGKRGRGLYNKARGIDHSEVKSSRVRKSVGTERTFATDVNDDEEILRKVWELSGKTAERLNKLQKSAKTVTVKIKTYQFETLSKQMSLRDSVSSEEDIYNIAYLLYNDLKDPDVPIRLIGVTVGNLEQSTYKNMTIYDFI</sequence>
<gene>
    <name evidence="1" type="primary">dinB</name>
    <name type="ordered locus">SACOL1955</name>
</gene>
<feature type="chain" id="PRO_0000173943" description="DNA polymerase IV">
    <location>
        <begin position="1"/>
        <end position="356"/>
    </location>
</feature>
<feature type="domain" description="UmuC" evidence="1">
    <location>
        <begin position="6"/>
        <end position="187"/>
    </location>
</feature>
<feature type="active site" evidence="1">
    <location>
        <position position="106"/>
    </location>
</feature>
<feature type="binding site" evidence="1">
    <location>
        <position position="10"/>
    </location>
    <ligand>
        <name>Mg(2+)</name>
        <dbReference type="ChEBI" id="CHEBI:18420"/>
    </ligand>
</feature>
<feature type="binding site" evidence="1">
    <location>
        <position position="105"/>
    </location>
    <ligand>
        <name>Mg(2+)</name>
        <dbReference type="ChEBI" id="CHEBI:18420"/>
    </ligand>
</feature>
<feature type="site" description="Substrate discrimination" evidence="1">
    <location>
        <position position="15"/>
    </location>
</feature>
<organism>
    <name type="scientific">Staphylococcus aureus (strain COL)</name>
    <dbReference type="NCBI Taxonomy" id="93062"/>
    <lineage>
        <taxon>Bacteria</taxon>
        <taxon>Bacillati</taxon>
        <taxon>Bacillota</taxon>
        <taxon>Bacilli</taxon>
        <taxon>Bacillales</taxon>
        <taxon>Staphylococcaceae</taxon>
        <taxon>Staphylococcus</taxon>
    </lineage>
</organism>
<proteinExistence type="inferred from homology"/>
<accession>Q5HEM7</accession>
<comment type="function">
    <text evidence="1">Poorly processive, error-prone DNA polymerase involved in untargeted mutagenesis. Copies undamaged DNA at stalled replication forks, which arise in vivo from mismatched or misaligned primer ends. These misaligned primers can be extended by PolIV. Exhibits no 3'-5' exonuclease (proofreading) activity. May be involved in translesional synthesis, in conjunction with the beta clamp from PolIII.</text>
</comment>
<comment type="catalytic activity">
    <reaction evidence="1">
        <text>DNA(n) + a 2'-deoxyribonucleoside 5'-triphosphate = DNA(n+1) + diphosphate</text>
        <dbReference type="Rhea" id="RHEA:22508"/>
        <dbReference type="Rhea" id="RHEA-COMP:17339"/>
        <dbReference type="Rhea" id="RHEA-COMP:17340"/>
        <dbReference type="ChEBI" id="CHEBI:33019"/>
        <dbReference type="ChEBI" id="CHEBI:61560"/>
        <dbReference type="ChEBI" id="CHEBI:173112"/>
        <dbReference type="EC" id="2.7.7.7"/>
    </reaction>
</comment>
<comment type="cofactor">
    <cofactor evidence="1">
        <name>Mg(2+)</name>
        <dbReference type="ChEBI" id="CHEBI:18420"/>
    </cofactor>
    <text evidence="1">Binds 2 magnesium ions per subunit.</text>
</comment>
<comment type="subunit">
    <text evidence="1">Monomer.</text>
</comment>
<comment type="subcellular location">
    <subcellularLocation>
        <location evidence="1">Cytoplasm</location>
    </subcellularLocation>
</comment>
<comment type="similarity">
    <text evidence="1">Belongs to the DNA polymerase type-Y family.</text>
</comment>
<protein>
    <recommendedName>
        <fullName evidence="1">DNA polymerase IV</fullName>
        <shortName evidence="1">Pol IV</shortName>
        <ecNumber evidence="1">2.7.7.7</ecNumber>
    </recommendedName>
</protein>
<keyword id="KW-0963">Cytoplasm</keyword>
<keyword id="KW-0227">DNA damage</keyword>
<keyword id="KW-0234">DNA repair</keyword>
<keyword id="KW-0235">DNA replication</keyword>
<keyword id="KW-0238">DNA-binding</keyword>
<keyword id="KW-0239">DNA-directed DNA polymerase</keyword>
<keyword id="KW-0460">Magnesium</keyword>
<keyword id="KW-0479">Metal-binding</keyword>
<keyword id="KW-0515">Mutator protein</keyword>
<keyword id="KW-0548">Nucleotidyltransferase</keyword>
<keyword id="KW-0808">Transferase</keyword>
<reference key="1">
    <citation type="journal article" date="2005" name="J. Bacteriol.">
        <title>Insights on evolution of virulence and resistance from the complete genome analysis of an early methicillin-resistant Staphylococcus aureus strain and a biofilm-producing methicillin-resistant Staphylococcus epidermidis strain.</title>
        <authorList>
            <person name="Gill S.R."/>
            <person name="Fouts D.E."/>
            <person name="Archer G.L."/>
            <person name="Mongodin E.F."/>
            <person name="DeBoy R.T."/>
            <person name="Ravel J."/>
            <person name="Paulsen I.T."/>
            <person name="Kolonay J.F."/>
            <person name="Brinkac L.M."/>
            <person name="Beanan M.J."/>
            <person name="Dodson R.J."/>
            <person name="Daugherty S.C."/>
            <person name="Madupu R."/>
            <person name="Angiuoli S.V."/>
            <person name="Durkin A.S."/>
            <person name="Haft D.H."/>
            <person name="Vamathevan J.J."/>
            <person name="Khouri H."/>
            <person name="Utterback T.R."/>
            <person name="Lee C."/>
            <person name="Dimitrov G."/>
            <person name="Jiang L."/>
            <person name="Qin H."/>
            <person name="Weidman J."/>
            <person name="Tran K."/>
            <person name="Kang K.H."/>
            <person name="Hance I.R."/>
            <person name="Nelson K.E."/>
            <person name="Fraser C.M."/>
        </authorList>
    </citation>
    <scope>NUCLEOTIDE SEQUENCE [LARGE SCALE GENOMIC DNA]</scope>
    <source>
        <strain>COL</strain>
    </source>
</reference>
<evidence type="ECO:0000255" key="1">
    <source>
        <dbReference type="HAMAP-Rule" id="MF_01113"/>
    </source>
</evidence>